<feature type="chain" id="PRO_0000378199" description="NTF2-related export protein 2">
    <location>
        <begin position="1"/>
        <end position="142"/>
    </location>
</feature>
<feature type="domain" description="NTF2" evidence="2">
    <location>
        <begin position="17"/>
        <end position="136"/>
    </location>
</feature>
<dbReference type="EMBL" id="BC149046">
    <property type="protein sequence ID" value="AAI49047.1"/>
    <property type="molecule type" value="mRNA"/>
</dbReference>
<dbReference type="RefSeq" id="NP_001093823.1">
    <property type="nucleotide sequence ID" value="NM_001100353.1"/>
</dbReference>
<dbReference type="RefSeq" id="XP_005227925.1">
    <property type="nucleotide sequence ID" value="XM_005227868.5"/>
</dbReference>
<dbReference type="RefSeq" id="XP_005227926.1">
    <property type="nucleotide sequence ID" value="XM_005227869.5"/>
</dbReference>
<dbReference type="RefSeq" id="XP_024843677.1">
    <property type="nucleotide sequence ID" value="XM_024987909.2"/>
</dbReference>
<dbReference type="SMR" id="A6QNX3"/>
<dbReference type="FunCoup" id="A6QNX3">
    <property type="interactions" value="1714"/>
</dbReference>
<dbReference type="STRING" id="9913.ENSBTAP00000027635"/>
<dbReference type="PaxDb" id="9913-ENSBTAP00000027635"/>
<dbReference type="Ensembl" id="ENSBTAT00000027635.6">
    <property type="protein sequence ID" value="ENSBTAP00000027635.5"/>
    <property type="gene ID" value="ENSBTAG00000020739.7"/>
</dbReference>
<dbReference type="GeneID" id="513043"/>
<dbReference type="KEGG" id="bta:513043"/>
<dbReference type="CTD" id="55916"/>
<dbReference type="VEuPathDB" id="HostDB:ENSBTAG00000020739"/>
<dbReference type="VGNC" id="VGNC:32385">
    <property type="gene designation" value="NXT2"/>
</dbReference>
<dbReference type="eggNOG" id="KOG4353">
    <property type="taxonomic scope" value="Eukaryota"/>
</dbReference>
<dbReference type="GeneTree" id="ENSGT00940000156381"/>
<dbReference type="HOGENOM" id="CLU_122448_1_1_1"/>
<dbReference type="InParanoid" id="A6QNX3"/>
<dbReference type="OMA" id="HFTRLYY"/>
<dbReference type="OrthoDB" id="25408at2759"/>
<dbReference type="TreeFam" id="TF318944"/>
<dbReference type="Proteomes" id="UP000009136">
    <property type="component" value="Chromosome X"/>
</dbReference>
<dbReference type="Bgee" id="ENSBTAG00000020739">
    <property type="expression patterns" value="Expressed in corpus epididymis and 106 other cell types or tissues"/>
</dbReference>
<dbReference type="GO" id="GO:0005737">
    <property type="term" value="C:cytoplasm"/>
    <property type="evidence" value="ECO:0000250"/>
    <property type="project" value="UniProtKB"/>
</dbReference>
<dbReference type="GO" id="GO:0044613">
    <property type="term" value="C:nuclear pore central transport channel"/>
    <property type="evidence" value="ECO:0000318"/>
    <property type="project" value="GO_Central"/>
</dbReference>
<dbReference type="GO" id="GO:0005634">
    <property type="term" value="C:nucleus"/>
    <property type="evidence" value="ECO:0000250"/>
    <property type="project" value="UniProtKB"/>
</dbReference>
<dbReference type="GO" id="GO:0048471">
    <property type="term" value="C:perinuclear region of cytoplasm"/>
    <property type="evidence" value="ECO:0000250"/>
    <property type="project" value="UniProtKB"/>
</dbReference>
<dbReference type="GO" id="GO:0016973">
    <property type="term" value="P:poly(A)+ mRNA export from nucleus"/>
    <property type="evidence" value="ECO:0000318"/>
    <property type="project" value="GO_Central"/>
</dbReference>
<dbReference type="GO" id="GO:0015031">
    <property type="term" value="P:protein transport"/>
    <property type="evidence" value="ECO:0007669"/>
    <property type="project" value="UniProtKB-KW"/>
</dbReference>
<dbReference type="CDD" id="cd00780">
    <property type="entry name" value="NTF2"/>
    <property type="match status" value="1"/>
</dbReference>
<dbReference type="FunFam" id="3.10.450.50:FF:000006">
    <property type="entry name" value="NTF2-related export protein 2 isoform 1"/>
    <property type="match status" value="1"/>
</dbReference>
<dbReference type="Gene3D" id="3.10.450.50">
    <property type="match status" value="1"/>
</dbReference>
<dbReference type="InterPro" id="IPR045875">
    <property type="entry name" value="NTF2"/>
</dbReference>
<dbReference type="InterPro" id="IPR032710">
    <property type="entry name" value="NTF2-like_dom_sf"/>
</dbReference>
<dbReference type="InterPro" id="IPR002075">
    <property type="entry name" value="NTF2_dom"/>
</dbReference>
<dbReference type="InterPro" id="IPR018222">
    <property type="entry name" value="Nuclear_transport_factor_2_euk"/>
</dbReference>
<dbReference type="PANTHER" id="PTHR12612">
    <property type="entry name" value="NUCLEAR TRANSPORT FACTOR 2"/>
    <property type="match status" value="1"/>
</dbReference>
<dbReference type="Pfam" id="PF02136">
    <property type="entry name" value="NTF2"/>
    <property type="match status" value="1"/>
</dbReference>
<dbReference type="SUPFAM" id="SSF54427">
    <property type="entry name" value="NTF2-like"/>
    <property type="match status" value="1"/>
</dbReference>
<dbReference type="PROSITE" id="PS50177">
    <property type="entry name" value="NTF2_DOMAIN"/>
    <property type="match status" value="1"/>
</dbReference>
<sequence>MAMAVEFKTYVDQACRAAEEFVNIYYETMDKRRRALTRLYLDKATLIWNGNVVTGLEALANFFDMLPSSEFQVNMLDCQPVHEQATQSQTTVLVVTSGTVKFDGNKQHYFNQNFLLTAQTTANNTVWKIASDCFRFQDWATI</sequence>
<keyword id="KW-0963">Cytoplasm</keyword>
<keyword id="KW-0509">mRNA transport</keyword>
<keyword id="KW-0539">Nucleus</keyword>
<keyword id="KW-0653">Protein transport</keyword>
<keyword id="KW-1185">Reference proteome</keyword>
<keyword id="KW-0813">Transport</keyword>
<name>NXT2_BOVIN</name>
<proteinExistence type="evidence at transcript level"/>
<reference key="1">
    <citation type="submission" date="2007-07" db="EMBL/GenBank/DDBJ databases">
        <authorList>
            <consortium name="NIH - Mammalian Gene Collection (MGC) project"/>
        </authorList>
    </citation>
    <scope>NUCLEOTIDE SEQUENCE [LARGE SCALE MRNA]</scope>
    <source>
        <strain>Hereford</strain>
        <tissue>Brain cortex</tissue>
    </source>
</reference>
<comment type="function">
    <text evidence="1">Regulator of protein export for NES-containing proteins. Also plays a role in mRNA nuclear export (By similarity).</text>
</comment>
<comment type="subunit">
    <text evidence="1">Associates with NXF1, NXF2, NXF3 and NXF5.</text>
</comment>
<comment type="subcellular location">
    <subcellularLocation>
        <location evidence="1">Nucleus</location>
    </subcellularLocation>
    <subcellularLocation>
        <location evidence="1">Cytoplasm</location>
    </subcellularLocation>
    <text evidence="1">Shuttles between the nucleus and the cytoplasm.</text>
</comment>
<evidence type="ECO:0000250" key="1"/>
<evidence type="ECO:0000255" key="2">
    <source>
        <dbReference type="PROSITE-ProRule" id="PRU00137"/>
    </source>
</evidence>
<protein>
    <recommendedName>
        <fullName>NTF2-related export protein 2</fullName>
    </recommendedName>
</protein>
<accession>A6QNX3</accession>
<organism>
    <name type="scientific">Bos taurus</name>
    <name type="common">Bovine</name>
    <dbReference type="NCBI Taxonomy" id="9913"/>
    <lineage>
        <taxon>Eukaryota</taxon>
        <taxon>Metazoa</taxon>
        <taxon>Chordata</taxon>
        <taxon>Craniata</taxon>
        <taxon>Vertebrata</taxon>
        <taxon>Euteleostomi</taxon>
        <taxon>Mammalia</taxon>
        <taxon>Eutheria</taxon>
        <taxon>Laurasiatheria</taxon>
        <taxon>Artiodactyla</taxon>
        <taxon>Ruminantia</taxon>
        <taxon>Pecora</taxon>
        <taxon>Bovidae</taxon>
        <taxon>Bovinae</taxon>
        <taxon>Bos</taxon>
    </lineage>
</organism>
<gene>
    <name type="primary">NXT2</name>
</gene>